<reference key="1">
    <citation type="journal article" date="1994" name="Insect Biochem. Mol. Biol.">
        <title>Isolation and identification of a pheromonotropic neuropeptide from the brain-suboesophageal ganglion complex of Lymantria dispar: a new member of the PBAN family.</title>
        <authorList>
            <person name="Masler E.P."/>
            <person name="Raina A.K."/>
            <person name="Wagner R.M."/>
            <person name="Kochansky J.P."/>
        </authorList>
    </citation>
    <scope>PROTEIN SEQUENCE</scope>
    <scope>AMIDATION AT LEU-33</scope>
    <scope>SYNTHESIS</scope>
    <source>
        <tissue>Subesophageal ganglion</tissue>
    </source>
</reference>
<protein>
    <recommendedName>
        <fullName>Pheromone biosynthesis-activating neuropeptide</fullName>
        <shortName>Lyd-PBAN</shortName>
    </recommendedName>
    <alternativeName>
        <fullName>FXPRL-amide</fullName>
    </alternativeName>
    <alternativeName>
        <fullName>Pyrokinin</fullName>
    </alternativeName>
</protein>
<evidence type="ECO:0000256" key="1">
    <source>
        <dbReference type="SAM" id="MobiDB-lite"/>
    </source>
</evidence>
<evidence type="ECO:0000269" key="2">
    <source>
    </source>
</evidence>
<evidence type="ECO:0000305" key="3"/>
<proteinExistence type="evidence at protein level"/>
<dbReference type="GO" id="GO:0005576">
    <property type="term" value="C:extracellular region"/>
    <property type="evidence" value="ECO:0007669"/>
    <property type="project" value="UniProtKB-SubCell"/>
</dbReference>
<dbReference type="GO" id="GO:0005184">
    <property type="term" value="F:neuropeptide hormone activity"/>
    <property type="evidence" value="ECO:0007669"/>
    <property type="project" value="InterPro"/>
</dbReference>
<dbReference type="GO" id="GO:0007218">
    <property type="term" value="P:neuropeptide signaling pathway"/>
    <property type="evidence" value="ECO:0007669"/>
    <property type="project" value="UniProtKB-KW"/>
</dbReference>
<dbReference type="GO" id="GO:0042811">
    <property type="term" value="P:pheromone biosynthetic process"/>
    <property type="evidence" value="ECO:0007669"/>
    <property type="project" value="InterPro"/>
</dbReference>
<dbReference type="InterPro" id="IPR008730">
    <property type="entry name" value="PBAN"/>
</dbReference>
<dbReference type="InterPro" id="IPR001484">
    <property type="entry name" value="Pyrokinin_CS"/>
</dbReference>
<dbReference type="Pfam" id="PF05874">
    <property type="entry name" value="PBAN"/>
    <property type="match status" value="1"/>
</dbReference>
<dbReference type="PROSITE" id="PS00539">
    <property type="entry name" value="PYROKININ"/>
    <property type="match status" value="1"/>
</dbReference>
<comment type="function">
    <text>Involved in the control of pheromone production in females.</text>
</comment>
<comment type="subcellular location">
    <subcellularLocation>
        <location>Secreted</location>
    </subcellularLocation>
</comment>
<comment type="similarity">
    <text evidence="3">Belongs to the pyrokinin family.</text>
</comment>
<feature type="peptide" id="PRO_0000045082" description="Pheromone biosynthesis-activating neuropeptide">
    <location>
        <begin position="1"/>
        <end position="33"/>
    </location>
</feature>
<feature type="region of interest" description="Disordered" evidence="1">
    <location>
        <begin position="1"/>
        <end position="33"/>
    </location>
</feature>
<feature type="compositionally biased region" description="Basic and acidic residues" evidence="1">
    <location>
        <begin position="13"/>
        <end position="26"/>
    </location>
</feature>
<feature type="modified residue" description="Leucine amide" evidence="2">
    <location>
        <position position="33"/>
    </location>
</feature>
<accession>P43511</accession>
<name>PBAN_LYMDI</name>
<organism>
    <name type="scientific">Lymantria dispar</name>
    <name type="common">Gypsy moth</name>
    <name type="synonym">Porthetria dispar</name>
    <dbReference type="NCBI Taxonomy" id="13123"/>
    <lineage>
        <taxon>Eukaryota</taxon>
        <taxon>Metazoa</taxon>
        <taxon>Ecdysozoa</taxon>
        <taxon>Arthropoda</taxon>
        <taxon>Hexapoda</taxon>
        <taxon>Insecta</taxon>
        <taxon>Pterygota</taxon>
        <taxon>Neoptera</taxon>
        <taxon>Endopterygota</taxon>
        <taxon>Lepidoptera</taxon>
        <taxon>Glossata</taxon>
        <taxon>Ditrysia</taxon>
        <taxon>Noctuoidea</taxon>
        <taxon>Erebidae</taxon>
        <taxon>Lymantriinae</taxon>
        <taxon>Lymantria</taxon>
    </lineage>
</organism>
<sequence length="33" mass="3884">LADDMPATMADQEVYRPEPEQIDSRNKYFSPRL</sequence>
<keyword id="KW-0027">Amidation</keyword>
<keyword id="KW-0903">Direct protein sequencing</keyword>
<keyword id="KW-0372">Hormone</keyword>
<keyword id="KW-0527">Neuropeptide</keyword>
<keyword id="KW-0964">Secreted</keyword>